<dbReference type="EMBL" id="CR382122">
    <property type="protein sequence ID" value="CAH02148.1"/>
    <property type="molecule type" value="Genomic_DNA"/>
</dbReference>
<dbReference type="RefSeq" id="XP_451755.1">
    <property type="nucleotide sequence ID" value="XM_451755.1"/>
</dbReference>
<dbReference type="PaxDb" id="284590-Q6CWD4"/>
<dbReference type="KEGG" id="kla:KLLA0_B04972g"/>
<dbReference type="eggNOG" id="ENOG502QW7F">
    <property type="taxonomic scope" value="Eukaryota"/>
</dbReference>
<dbReference type="HOGENOM" id="CLU_776604_0_0_1"/>
<dbReference type="InParanoid" id="Q6CWD4"/>
<dbReference type="Proteomes" id="UP000000598">
    <property type="component" value="Chromosome B"/>
</dbReference>
<dbReference type="GO" id="GO:0005628">
    <property type="term" value="C:prospore membrane"/>
    <property type="evidence" value="ECO:0007669"/>
    <property type="project" value="UniProtKB-SubCell"/>
</dbReference>
<dbReference type="GO" id="GO:0030435">
    <property type="term" value="P:sporulation resulting in formation of a cellular spore"/>
    <property type="evidence" value="ECO:0007669"/>
    <property type="project" value="UniProtKB-KW"/>
</dbReference>
<gene>
    <name type="primary">SMA2</name>
    <name type="ordered locus">KLLA0B04972g</name>
</gene>
<comment type="function">
    <text evidence="1">Involved in spore and ascus formation. Required for the efficient assembly of the precursors of the prospore membrane to a continuous prospore membrane (By similarity).</text>
</comment>
<comment type="subcellular location">
    <subcellularLocation>
        <location evidence="1">Prospore membrane</location>
        <topology evidence="1">Multi-pass membrane protein</topology>
    </subcellularLocation>
</comment>
<comment type="similarity">
    <text evidence="4">Belongs to the SMA2 family.</text>
</comment>
<feature type="chain" id="PRO_0000324502" description="Spore membrane assembly protein 2">
    <location>
        <begin position="1"/>
        <end position="378"/>
    </location>
</feature>
<feature type="topological domain" description="Cytoplasmic" evidence="2">
    <location>
        <begin position="1"/>
        <end position="5"/>
    </location>
</feature>
<feature type="transmembrane region" description="Helical" evidence="2">
    <location>
        <begin position="6"/>
        <end position="26"/>
    </location>
</feature>
<feature type="topological domain" description="Lumenal" evidence="2">
    <location>
        <begin position="27"/>
        <end position="217"/>
    </location>
</feature>
<feature type="transmembrane region" description="Helical" evidence="2">
    <location>
        <begin position="218"/>
        <end position="238"/>
    </location>
</feature>
<feature type="topological domain" description="Cytoplasmic" evidence="2">
    <location>
        <begin position="239"/>
        <end position="267"/>
    </location>
</feature>
<feature type="transmembrane region" description="Helical" evidence="2">
    <location>
        <begin position="268"/>
        <end position="288"/>
    </location>
</feature>
<feature type="topological domain" description="Lumenal" evidence="2">
    <location>
        <begin position="289"/>
        <end position="302"/>
    </location>
</feature>
<feature type="transmembrane region" description="Helical" evidence="2">
    <location>
        <begin position="303"/>
        <end position="323"/>
    </location>
</feature>
<feature type="topological domain" description="Cytoplasmic" evidence="2">
    <location>
        <begin position="324"/>
        <end position="378"/>
    </location>
</feature>
<feature type="region of interest" description="Disordered" evidence="3">
    <location>
        <begin position="344"/>
        <end position="365"/>
    </location>
</feature>
<feature type="compositionally biased region" description="Acidic residues" evidence="3">
    <location>
        <begin position="347"/>
        <end position="357"/>
    </location>
</feature>
<reference key="1">
    <citation type="journal article" date="2004" name="Nature">
        <title>Genome evolution in yeasts.</title>
        <authorList>
            <person name="Dujon B."/>
            <person name="Sherman D."/>
            <person name="Fischer G."/>
            <person name="Durrens P."/>
            <person name="Casaregola S."/>
            <person name="Lafontaine I."/>
            <person name="de Montigny J."/>
            <person name="Marck C."/>
            <person name="Neuveglise C."/>
            <person name="Talla E."/>
            <person name="Goffard N."/>
            <person name="Frangeul L."/>
            <person name="Aigle M."/>
            <person name="Anthouard V."/>
            <person name="Babour A."/>
            <person name="Barbe V."/>
            <person name="Barnay S."/>
            <person name="Blanchin S."/>
            <person name="Beckerich J.-M."/>
            <person name="Beyne E."/>
            <person name="Bleykasten C."/>
            <person name="Boisrame A."/>
            <person name="Boyer J."/>
            <person name="Cattolico L."/>
            <person name="Confanioleri F."/>
            <person name="de Daruvar A."/>
            <person name="Despons L."/>
            <person name="Fabre E."/>
            <person name="Fairhead C."/>
            <person name="Ferry-Dumazet H."/>
            <person name="Groppi A."/>
            <person name="Hantraye F."/>
            <person name="Hennequin C."/>
            <person name="Jauniaux N."/>
            <person name="Joyet P."/>
            <person name="Kachouri R."/>
            <person name="Kerrest A."/>
            <person name="Koszul R."/>
            <person name="Lemaire M."/>
            <person name="Lesur I."/>
            <person name="Ma L."/>
            <person name="Muller H."/>
            <person name="Nicaud J.-M."/>
            <person name="Nikolski M."/>
            <person name="Oztas S."/>
            <person name="Ozier-Kalogeropoulos O."/>
            <person name="Pellenz S."/>
            <person name="Potier S."/>
            <person name="Richard G.-F."/>
            <person name="Straub M.-L."/>
            <person name="Suleau A."/>
            <person name="Swennen D."/>
            <person name="Tekaia F."/>
            <person name="Wesolowski-Louvel M."/>
            <person name="Westhof E."/>
            <person name="Wirth B."/>
            <person name="Zeniou-Meyer M."/>
            <person name="Zivanovic Y."/>
            <person name="Bolotin-Fukuhara M."/>
            <person name="Thierry A."/>
            <person name="Bouchier C."/>
            <person name="Caudron B."/>
            <person name="Scarpelli C."/>
            <person name="Gaillardin C."/>
            <person name="Weissenbach J."/>
            <person name="Wincker P."/>
            <person name="Souciet J.-L."/>
        </authorList>
    </citation>
    <scope>NUCLEOTIDE SEQUENCE [LARGE SCALE GENOMIC DNA]</scope>
    <source>
        <strain>ATCC 8585 / CBS 2359 / DSM 70799 / NBRC 1267 / NRRL Y-1140 / WM37</strain>
    </source>
</reference>
<accession>Q6CWD4</accession>
<protein>
    <recommendedName>
        <fullName>Spore membrane assembly protein 2</fullName>
    </recommendedName>
</protein>
<name>SMA2_KLULA</name>
<organism>
    <name type="scientific">Kluyveromyces lactis (strain ATCC 8585 / CBS 2359 / DSM 70799 / NBRC 1267 / NRRL Y-1140 / WM37)</name>
    <name type="common">Yeast</name>
    <name type="synonym">Candida sphaerica</name>
    <dbReference type="NCBI Taxonomy" id="284590"/>
    <lineage>
        <taxon>Eukaryota</taxon>
        <taxon>Fungi</taxon>
        <taxon>Dikarya</taxon>
        <taxon>Ascomycota</taxon>
        <taxon>Saccharomycotina</taxon>
        <taxon>Saccharomycetes</taxon>
        <taxon>Saccharomycetales</taxon>
        <taxon>Saccharomycetaceae</taxon>
        <taxon>Kluyveromyces</taxon>
    </lineage>
</organism>
<sequence length="378" mass="43806">MRFKYISFIILISFSLLVWFSHLSNFTCTSSANLPICMPQYVFHFKDDTPTSKVLFSTVKEFFSLLSFFTLDFNWGIDLSELQDRYNQSNLINIFHPSNTYYVNAFGYCKHQAQDEKLNHYCIDNTNGLNIISVLIRDLGFQFGVLSETNVKITGDSFWIIYQTLINSFNKFLEDDKRGNTLLKMITPNDPNEMEQWKTRLWLINIYDAVNVVLKWTVVANCILASLCLMLLLFWMWMQIEHKKTQSPIKQLNWNINSICSITRCLSICNATITFIYILHILLLTFMINCFRYKRLQIIHASLGTGAWFHIARFFVELIFAVLCFKWMTPHSAMSASVMSETQSTAVEDEEEKDTEDNYSALNPASGTTAVDGFLLTV</sequence>
<evidence type="ECO:0000250" key="1"/>
<evidence type="ECO:0000255" key="2"/>
<evidence type="ECO:0000256" key="3">
    <source>
        <dbReference type="SAM" id="MobiDB-lite"/>
    </source>
</evidence>
<evidence type="ECO:0000305" key="4"/>
<proteinExistence type="inferred from homology"/>
<keyword id="KW-0472">Membrane</keyword>
<keyword id="KW-1185">Reference proteome</keyword>
<keyword id="KW-0749">Sporulation</keyword>
<keyword id="KW-0812">Transmembrane</keyword>
<keyword id="KW-1133">Transmembrane helix</keyword>